<reference key="1">
    <citation type="journal article" date="1994" name="Science">
        <title>Complete nucleotide sequence of Saccharomyces cerevisiae chromosome VIII.</title>
        <authorList>
            <person name="Johnston M."/>
            <person name="Andrews S."/>
            <person name="Brinkman R."/>
            <person name="Cooper J."/>
            <person name="Ding H."/>
            <person name="Dover J."/>
            <person name="Du Z."/>
            <person name="Favello A."/>
            <person name="Fulton L."/>
            <person name="Gattung S."/>
            <person name="Geisel C."/>
            <person name="Kirsten J."/>
            <person name="Kucaba T."/>
            <person name="Hillier L.W."/>
            <person name="Jier M."/>
            <person name="Johnston L."/>
            <person name="Langston Y."/>
            <person name="Latreille P."/>
            <person name="Louis E.J."/>
            <person name="Macri C."/>
            <person name="Mardis E."/>
            <person name="Menezes S."/>
            <person name="Mouser L."/>
            <person name="Nhan M."/>
            <person name="Rifkin L."/>
            <person name="Riles L."/>
            <person name="St Peter H."/>
            <person name="Trevaskis E."/>
            <person name="Vaughan K."/>
            <person name="Vignati D."/>
            <person name="Wilcox L."/>
            <person name="Wohldman P."/>
            <person name="Waterston R."/>
            <person name="Wilson R."/>
            <person name="Vaudin M."/>
        </authorList>
    </citation>
    <scope>NUCLEOTIDE SEQUENCE [LARGE SCALE GENOMIC DNA]</scope>
    <source>
        <strain>ATCC 204508 / S288c</strain>
    </source>
</reference>
<reference key="2">
    <citation type="journal article" date="2014" name="G3 (Bethesda)">
        <title>The reference genome sequence of Saccharomyces cerevisiae: Then and now.</title>
        <authorList>
            <person name="Engel S.R."/>
            <person name="Dietrich F.S."/>
            <person name="Fisk D.G."/>
            <person name="Binkley G."/>
            <person name="Balakrishnan R."/>
            <person name="Costanzo M.C."/>
            <person name="Dwight S.S."/>
            <person name="Hitz B.C."/>
            <person name="Karra K."/>
            <person name="Nash R.S."/>
            <person name="Weng S."/>
            <person name="Wong E.D."/>
            <person name="Lloyd P."/>
            <person name="Skrzypek M.S."/>
            <person name="Miyasato S.R."/>
            <person name="Simison M."/>
            <person name="Cherry J.M."/>
        </authorList>
    </citation>
    <scope>GENOME REANNOTATION</scope>
    <source>
        <strain>ATCC 204508 / S288c</strain>
    </source>
</reference>
<reference key="3">
    <citation type="unpublished observations" date="1995-01">
        <title>Analysis of the PEP11 locus in Saccharomyces cerevisiae.</title>
        <authorList>
            <person name="Friedrichsen D.M."/>
            <person name="Brands A."/>
            <person name="Hiller M.A."/>
            <person name="Bachhawat A."/>
            <person name="Jones E.W."/>
        </authorList>
    </citation>
    <scope>IDENTIFICATION</scope>
</reference>
<reference key="4">
    <citation type="journal article" date="1998" name="J. Cell Biol.">
        <title>A membrane coat complex essential for endosome-to-Golgi retrograde transport in yeast.</title>
        <authorList>
            <person name="Seaman M.N."/>
            <person name="McCaffery J.M."/>
            <person name="Emr S.D."/>
        </authorList>
    </citation>
    <scope>IDENTIFICATION IN THE RETROMER COMPLEX</scope>
</reference>
<reference key="5">
    <citation type="journal article" date="2003" name="Nature">
        <title>Global analysis of protein expression in yeast.</title>
        <authorList>
            <person name="Ghaemmaghami S."/>
            <person name="Huh W.-K."/>
            <person name="Bower K."/>
            <person name="Howson R.W."/>
            <person name="Belle A."/>
            <person name="Dephoure N."/>
            <person name="O'Shea E.K."/>
            <person name="Weissman J.S."/>
        </authorList>
    </citation>
    <scope>LEVEL OF PROTEIN EXPRESSION [LARGE SCALE ANALYSIS]</scope>
</reference>
<reference key="6">
    <citation type="journal article" date="2008" name="Mol. Cell. Proteomics">
        <title>A multidimensional chromatography technology for in-depth phosphoproteome analysis.</title>
        <authorList>
            <person name="Albuquerque C.P."/>
            <person name="Smolka M.B."/>
            <person name="Payne S.H."/>
            <person name="Bafna V."/>
            <person name="Eng J."/>
            <person name="Zhou H."/>
        </authorList>
    </citation>
    <scope>IDENTIFICATION BY MASS SPECTROMETRY [LARGE SCALE ANALYSIS]</scope>
</reference>
<reference key="7">
    <citation type="journal article" date="2012" name="Proc. Natl. Acad. Sci. U.S.A.">
        <title>N-terminal acetylome analyses and functional insights of the N-terminal acetyltransferase NatB.</title>
        <authorList>
            <person name="Van Damme P."/>
            <person name="Lasa M."/>
            <person name="Polevoda B."/>
            <person name="Gazquez C."/>
            <person name="Elosegui-Artola A."/>
            <person name="Kim D.S."/>
            <person name="De Juan-Pardo E."/>
            <person name="Demeyer K."/>
            <person name="Hole K."/>
            <person name="Larrea E."/>
            <person name="Timmerman E."/>
            <person name="Prieto J."/>
            <person name="Arnesen T."/>
            <person name="Sherman F."/>
            <person name="Gevaert K."/>
            <person name="Aldabe R."/>
        </authorList>
    </citation>
    <scope>IDENTIFICATION BY MASS SPECTROMETRY [LARGE SCALE ANALYSIS]</scope>
</reference>
<feature type="chain" id="PRO_0000058305" description="Vacuolar protein sorting-associated protein 29">
    <location>
        <begin position="1"/>
        <end position="282"/>
    </location>
</feature>
<feature type="region of interest" description="Disordered" evidence="1">
    <location>
        <begin position="173"/>
        <end position="242"/>
    </location>
</feature>
<feature type="compositionally biased region" description="Basic and acidic residues" evidence="1">
    <location>
        <begin position="178"/>
        <end position="187"/>
    </location>
</feature>
<feature type="compositionally biased region" description="Basic and acidic residues" evidence="1">
    <location>
        <begin position="212"/>
        <end position="232"/>
    </location>
</feature>
<organism>
    <name type="scientific">Saccharomyces cerevisiae (strain ATCC 204508 / S288c)</name>
    <name type="common">Baker's yeast</name>
    <dbReference type="NCBI Taxonomy" id="559292"/>
    <lineage>
        <taxon>Eukaryota</taxon>
        <taxon>Fungi</taxon>
        <taxon>Dikarya</taxon>
        <taxon>Ascomycota</taxon>
        <taxon>Saccharomycotina</taxon>
        <taxon>Saccharomycetes</taxon>
        <taxon>Saccharomycetales</taxon>
        <taxon>Saccharomycetaceae</taxon>
        <taxon>Saccharomyces</taxon>
    </lineage>
</organism>
<name>VPS29_YEAST</name>
<proteinExistence type="evidence at protein level"/>
<gene>
    <name type="primary">VPS29</name>
    <name type="synonym">PEP11</name>
    <name type="synonym">VTP6</name>
    <name type="ordered locus">YHR012W</name>
</gene>
<dbReference type="EMBL" id="U10400">
    <property type="protein sequence ID" value="AAB68947.1"/>
    <property type="molecule type" value="Genomic_DNA"/>
</dbReference>
<dbReference type="EMBL" id="BK006934">
    <property type="protein sequence ID" value="DAA06701.1"/>
    <property type="molecule type" value="Genomic_DNA"/>
</dbReference>
<dbReference type="PIR" id="S46793">
    <property type="entry name" value="S46793"/>
</dbReference>
<dbReference type="RefSeq" id="NP_011876.1">
    <property type="nucleotide sequence ID" value="NM_001179142.1"/>
</dbReference>
<dbReference type="SMR" id="P38759"/>
<dbReference type="BioGRID" id="36439">
    <property type="interactions" value="403"/>
</dbReference>
<dbReference type="ComplexPortal" id="CPX-1653">
    <property type="entry name" value="Retromer complex"/>
</dbReference>
<dbReference type="DIP" id="DIP-4205N"/>
<dbReference type="FunCoup" id="P38759">
    <property type="interactions" value="1249"/>
</dbReference>
<dbReference type="IntAct" id="P38759">
    <property type="interactions" value="7"/>
</dbReference>
<dbReference type="MINT" id="P38759"/>
<dbReference type="STRING" id="4932.YHR012W"/>
<dbReference type="TCDB" id="9.A.63.1.1">
    <property type="family name" value="the retromer-dependent vacuolar protein sorting (r-vps) family"/>
</dbReference>
<dbReference type="iPTMnet" id="P38759"/>
<dbReference type="PaxDb" id="4932-YHR012W"/>
<dbReference type="PeptideAtlas" id="P38759"/>
<dbReference type="EnsemblFungi" id="YHR012W_mRNA">
    <property type="protein sequence ID" value="YHR012W"/>
    <property type="gene ID" value="YHR012W"/>
</dbReference>
<dbReference type="GeneID" id="856403"/>
<dbReference type="KEGG" id="sce:YHR012W"/>
<dbReference type="AGR" id="SGD:S000001054"/>
<dbReference type="SGD" id="S000001054">
    <property type="gene designation" value="VPS29"/>
</dbReference>
<dbReference type="VEuPathDB" id="FungiDB:YHR012W"/>
<dbReference type="eggNOG" id="KOG3325">
    <property type="taxonomic scope" value="Eukaryota"/>
</dbReference>
<dbReference type="GeneTree" id="ENSGT00390000012669"/>
<dbReference type="HOGENOM" id="CLU_063749_0_0_1"/>
<dbReference type="InParanoid" id="P38759"/>
<dbReference type="OMA" id="IGCCNGY"/>
<dbReference type="OrthoDB" id="10258130at2759"/>
<dbReference type="BioCyc" id="YEAST:G3O-31075-MONOMER"/>
<dbReference type="Reactome" id="R-SCE-3238698">
    <property type="pathway name" value="WNT ligand biogenesis and trafficking"/>
</dbReference>
<dbReference type="BioGRID-ORCS" id="856403">
    <property type="hits" value="9 hits in 10 CRISPR screens"/>
</dbReference>
<dbReference type="PRO" id="PR:P38759"/>
<dbReference type="Proteomes" id="UP000002311">
    <property type="component" value="Chromosome VIII"/>
</dbReference>
<dbReference type="RNAct" id="P38759">
    <property type="molecule type" value="protein"/>
</dbReference>
<dbReference type="GO" id="GO:0005829">
    <property type="term" value="C:cytosol"/>
    <property type="evidence" value="ECO:0007669"/>
    <property type="project" value="GOC"/>
</dbReference>
<dbReference type="GO" id="GO:0012505">
    <property type="term" value="C:endomembrane system"/>
    <property type="evidence" value="ECO:0000303"/>
    <property type="project" value="ComplexPortal"/>
</dbReference>
<dbReference type="GO" id="GO:0005768">
    <property type="term" value="C:endosome"/>
    <property type="evidence" value="ECO:0000353"/>
    <property type="project" value="SGD"/>
</dbReference>
<dbReference type="GO" id="GO:0030904">
    <property type="term" value="C:retromer complex"/>
    <property type="evidence" value="ECO:0000315"/>
    <property type="project" value="SGD"/>
</dbReference>
<dbReference type="GO" id="GO:0030906">
    <property type="term" value="C:retromer, cargo-selective complex"/>
    <property type="evidence" value="ECO:0000353"/>
    <property type="project" value="SGD"/>
</dbReference>
<dbReference type="GO" id="GO:0032456">
    <property type="term" value="P:endocytic recycling"/>
    <property type="evidence" value="ECO:0000303"/>
    <property type="project" value="ComplexPortal"/>
</dbReference>
<dbReference type="GO" id="GO:0006886">
    <property type="term" value="P:intracellular protein transport"/>
    <property type="evidence" value="ECO:0000318"/>
    <property type="project" value="GO_Central"/>
</dbReference>
<dbReference type="GO" id="GO:0042147">
    <property type="term" value="P:retrograde transport, endosome to Golgi"/>
    <property type="evidence" value="ECO:0000353"/>
    <property type="project" value="SGD"/>
</dbReference>
<dbReference type="FunFam" id="3.60.21.10:FF:000078">
    <property type="entry name" value="Vacuolar protein sorting-associated protein 29"/>
    <property type="match status" value="1"/>
</dbReference>
<dbReference type="FunFam" id="3.60.21.10:FF:000100">
    <property type="entry name" value="Vacuolar protein sorting-associated protein 29"/>
    <property type="match status" value="1"/>
</dbReference>
<dbReference type="Gene3D" id="3.60.21.10">
    <property type="match status" value="2"/>
</dbReference>
<dbReference type="InterPro" id="IPR024654">
    <property type="entry name" value="Calcineurin-like_PHP_lpxH"/>
</dbReference>
<dbReference type="InterPro" id="IPR029052">
    <property type="entry name" value="Metallo-depent_PP-like"/>
</dbReference>
<dbReference type="InterPro" id="IPR000979">
    <property type="entry name" value="Phosphodiesterase_MJ0936/Vps29"/>
</dbReference>
<dbReference type="NCBIfam" id="TIGR00040">
    <property type="entry name" value="yfcE"/>
    <property type="match status" value="1"/>
</dbReference>
<dbReference type="PANTHER" id="PTHR11124">
    <property type="entry name" value="VACUOLAR SORTING PROTEIN VPS29"/>
    <property type="match status" value="1"/>
</dbReference>
<dbReference type="Pfam" id="PF12850">
    <property type="entry name" value="Metallophos_2"/>
    <property type="match status" value="1"/>
</dbReference>
<dbReference type="SUPFAM" id="SSF56300">
    <property type="entry name" value="Metallo-dependent phosphatases"/>
    <property type="match status" value="1"/>
</dbReference>
<accession>P38759</accession>
<accession>D3DKV7</accession>
<keyword id="KW-0653">Protein transport</keyword>
<keyword id="KW-1185">Reference proteome</keyword>
<keyword id="KW-0813">Transport</keyword>
<protein>
    <recommendedName>
        <fullName>Vacuolar protein sorting-associated protein 29</fullName>
    </recommendedName>
    <alternativeName>
        <fullName>Carboxypeptidase Y-deficient protein 11</fullName>
    </alternativeName>
    <alternativeName>
        <fullName>Vesicle protein sorting 29</fullName>
    </alternativeName>
</protein>
<evidence type="ECO:0000256" key="1">
    <source>
        <dbReference type="SAM" id="MobiDB-lite"/>
    </source>
</evidence>
<evidence type="ECO:0000269" key="2">
    <source>
    </source>
</evidence>
<evidence type="ECO:0000269" key="3">
    <source>
    </source>
</evidence>
<evidence type="ECO:0000305" key="4"/>
<comment type="function">
    <text>Plays a role in vesicular protein sorting. Required for the endosome-to-Golgi retrieval of the vacuolar protein sorting receptor VPS10. Component of the membrane-associated retromer complex which is essential in endosome-to-Golgi retrograde transport. The VPS29-VPS26-VPS35 subcomplex may be involved in cargo selection.</text>
</comment>
<comment type="subunit">
    <text evidence="3">Component of the retromer complex which consists of VPS29, VPS26, VPS35, VPS5 and VPS17. Component of a retromer subcomplex consisting of VPS29, VPS26 and VPS35.</text>
</comment>
<comment type="interaction">
    <interactant intactId="EBI-13092">
        <id>P38759</id>
    </interactant>
    <interactant intactId="EBI-20366">
        <id>P32913</id>
        <label>VPS17</label>
    </interactant>
    <organismsDiffer>false</organismsDiffer>
    <experiments>3</experiments>
</comment>
<comment type="interaction">
    <interactant intactId="EBI-13092">
        <id>P38759</id>
    </interactant>
    <interactant intactId="EBI-20415">
        <id>P34110</id>
        <label>VPS35</label>
    </interactant>
    <organismsDiffer>false</organismsDiffer>
    <experiments>3</experiments>
</comment>
<comment type="miscellaneous">
    <text evidence="2">Present with 259 molecules/cell in log phase SD medium.</text>
</comment>
<comment type="similarity">
    <text evidence="4">Belongs to the VPS29 family.</text>
</comment>
<sequence length="282" mass="31013">MLLLALSDAHIPDRATDLPVKFKKLLSVPDKISQVALLGNSTKSYDFLKFVNQISNNITIVRGEFDNGHLPSTKKDKASDNSRPMEEIPMNSIIRQGALKIGCCSGYTVVPKNDPLSLLALARQLDVDILLWGGTHNVEAYTLEGKFFVNPGSCTGAFNTDWPIVFDVEDSDEAVTSEVDKPTKENQSEDDDAKGGSTGKEQPGSYTPKEGTAGERENENESNVKPENQFKEDEVDMSDSDINGSNSPSFCLLDIQGNTCTLYIYLYVNGEVKVDKVVYEKE</sequence>